<reference key="1">
    <citation type="journal article" date="2005" name="BMC Biol.">
        <title>The sequence of rice chromosomes 11 and 12, rich in disease resistance genes and recent gene duplications.</title>
        <authorList>
            <consortium name="The rice chromosomes 11 and 12 sequencing consortia"/>
        </authorList>
    </citation>
    <scope>NUCLEOTIDE SEQUENCE [LARGE SCALE GENOMIC DNA]</scope>
    <source>
        <strain>cv. Nipponbare</strain>
    </source>
</reference>
<reference key="2">
    <citation type="journal article" date="2005" name="Nature">
        <title>The map-based sequence of the rice genome.</title>
        <authorList>
            <consortium name="International rice genome sequencing project (IRGSP)"/>
        </authorList>
    </citation>
    <scope>NUCLEOTIDE SEQUENCE [LARGE SCALE GENOMIC DNA]</scope>
    <source>
        <strain>cv. Nipponbare</strain>
    </source>
</reference>
<reference key="3">
    <citation type="journal article" date="2008" name="Nucleic Acids Res.">
        <title>The rice annotation project database (RAP-DB): 2008 update.</title>
        <authorList>
            <consortium name="The rice annotation project (RAP)"/>
        </authorList>
    </citation>
    <scope>GENOME REANNOTATION</scope>
    <source>
        <strain>cv. Nipponbare</strain>
    </source>
</reference>
<reference key="4">
    <citation type="journal article" date="2013" name="Rice">
        <title>Improvement of the Oryza sativa Nipponbare reference genome using next generation sequence and optical map data.</title>
        <authorList>
            <person name="Kawahara Y."/>
            <person name="de la Bastide M."/>
            <person name="Hamilton J.P."/>
            <person name="Kanamori H."/>
            <person name="McCombie W.R."/>
            <person name="Ouyang S."/>
            <person name="Schwartz D.C."/>
            <person name="Tanaka T."/>
            <person name="Wu J."/>
            <person name="Zhou S."/>
            <person name="Childs K.L."/>
            <person name="Davidson R.M."/>
            <person name="Lin H."/>
            <person name="Quesada-Ocampo L."/>
            <person name="Vaillancourt B."/>
            <person name="Sakai H."/>
            <person name="Lee S.S."/>
            <person name="Kim J."/>
            <person name="Numa H."/>
            <person name="Itoh T."/>
            <person name="Buell C.R."/>
            <person name="Matsumoto T."/>
        </authorList>
    </citation>
    <scope>GENOME REANNOTATION</scope>
    <source>
        <strain>cv. Nipponbare</strain>
    </source>
</reference>
<reference key="5">
    <citation type="journal article" date="2005" name="PLoS Biol.">
        <title>The genomes of Oryza sativa: a history of duplications.</title>
        <authorList>
            <person name="Yu J."/>
            <person name="Wang J."/>
            <person name="Lin W."/>
            <person name="Li S."/>
            <person name="Li H."/>
            <person name="Zhou J."/>
            <person name="Ni P."/>
            <person name="Dong W."/>
            <person name="Hu S."/>
            <person name="Zeng C."/>
            <person name="Zhang J."/>
            <person name="Zhang Y."/>
            <person name="Li R."/>
            <person name="Xu Z."/>
            <person name="Li S."/>
            <person name="Li X."/>
            <person name="Zheng H."/>
            <person name="Cong L."/>
            <person name="Lin L."/>
            <person name="Yin J."/>
            <person name="Geng J."/>
            <person name="Li G."/>
            <person name="Shi J."/>
            <person name="Liu J."/>
            <person name="Lv H."/>
            <person name="Li J."/>
            <person name="Wang J."/>
            <person name="Deng Y."/>
            <person name="Ran L."/>
            <person name="Shi X."/>
            <person name="Wang X."/>
            <person name="Wu Q."/>
            <person name="Li C."/>
            <person name="Ren X."/>
            <person name="Wang J."/>
            <person name="Wang X."/>
            <person name="Li D."/>
            <person name="Liu D."/>
            <person name="Zhang X."/>
            <person name="Ji Z."/>
            <person name="Zhao W."/>
            <person name="Sun Y."/>
            <person name="Zhang Z."/>
            <person name="Bao J."/>
            <person name="Han Y."/>
            <person name="Dong L."/>
            <person name="Ji J."/>
            <person name="Chen P."/>
            <person name="Wu S."/>
            <person name="Liu J."/>
            <person name="Xiao Y."/>
            <person name="Bu D."/>
            <person name="Tan J."/>
            <person name="Yang L."/>
            <person name="Ye C."/>
            <person name="Zhang J."/>
            <person name="Xu J."/>
            <person name="Zhou Y."/>
            <person name="Yu Y."/>
            <person name="Zhang B."/>
            <person name="Zhuang S."/>
            <person name="Wei H."/>
            <person name="Liu B."/>
            <person name="Lei M."/>
            <person name="Yu H."/>
            <person name="Li Y."/>
            <person name="Xu H."/>
            <person name="Wei S."/>
            <person name="He X."/>
            <person name="Fang L."/>
            <person name="Zhang Z."/>
            <person name="Zhang Y."/>
            <person name="Huang X."/>
            <person name="Su Z."/>
            <person name="Tong W."/>
            <person name="Li J."/>
            <person name="Tong Z."/>
            <person name="Li S."/>
            <person name="Ye J."/>
            <person name="Wang L."/>
            <person name="Fang L."/>
            <person name="Lei T."/>
            <person name="Chen C.-S."/>
            <person name="Chen H.-C."/>
            <person name="Xu Z."/>
            <person name="Li H."/>
            <person name="Huang H."/>
            <person name="Zhang F."/>
            <person name="Xu H."/>
            <person name="Li N."/>
            <person name="Zhao C."/>
            <person name="Li S."/>
            <person name="Dong L."/>
            <person name="Huang Y."/>
            <person name="Li L."/>
            <person name="Xi Y."/>
            <person name="Qi Q."/>
            <person name="Li W."/>
            <person name="Zhang B."/>
            <person name="Hu W."/>
            <person name="Zhang Y."/>
            <person name="Tian X."/>
            <person name="Jiao Y."/>
            <person name="Liang X."/>
            <person name="Jin J."/>
            <person name="Gao L."/>
            <person name="Zheng W."/>
            <person name="Hao B."/>
            <person name="Liu S.-M."/>
            <person name="Wang W."/>
            <person name="Yuan L."/>
            <person name="Cao M."/>
            <person name="McDermott J."/>
            <person name="Samudrala R."/>
            <person name="Wang J."/>
            <person name="Wong G.K.-S."/>
            <person name="Yang H."/>
        </authorList>
    </citation>
    <scope>NUCLEOTIDE SEQUENCE [LARGE SCALE GENOMIC DNA]</scope>
    <source>
        <strain>cv. Nipponbare</strain>
    </source>
</reference>
<reference key="6">
    <citation type="journal article" date="2003" name="Science">
        <title>Collection, mapping, and annotation of over 28,000 cDNA clones from japonica rice.</title>
        <authorList>
            <consortium name="The rice full-length cDNA consortium"/>
        </authorList>
    </citation>
    <scope>NUCLEOTIDE SEQUENCE [LARGE SCALE MRNA]</scope>
    <source>
        <strain>cv. Nipponbare</strain>
    </source>
</reference>
<reference key="7">
    <citation type="journal article" date="2007" name="Biochem. Biophys. Res. Commun.">
        <title>Sequence and expression analysis of histone deacetylases in rice.</title>
        <authorList>
            <person name="Fu W."/>
            <person name="Wu K."/>
            <person name="Duan J."/>
        </authorList>
    </citation>
    <scope>TISSUE SPECIFICITY</scope>
</reference>
<reference key="8">
    <citation type="journal article" date="2009" name="FEBS Lett.">
        <title>Subcellular localization of rice histone deacetylases in organelles.</title>
        <authorList>
            <person name="Chung P.J."/>
            <person name="Kim Y.S."/>
            <person name="Park S.H."/>
            <person name="Nahm B.H."/>
            <person name="Kim J.K."/>
        </authorList>
    </citation>
    <scope>SUBCELLULAR LOCATION</scope>
    <scope>TISSUE SPECIFICITY</scope>
</reference>
<reference key="9">
    <citation type="journal article" date="2018" name="J. Pineal Res.">
        <title>Rice histone deacetylase 10 and Arabidopsis histone deacetylase 14 genes encode N-acetylserotonin deacetylase, which catalyzes conversion of N-acetylserotonin into serotonin, a reverse reaction for melatonin biosynthesis in plants.</title>
        <authorList>
            <person name="Lee K."/>
            <person name="Lee H.Y."/>
            <person name="Back K."/>
        </authorList>
    </citation>
    <scope>FUNCTION</scope>
    <scope>CATALYTIC ACTIVITY</scope>
    <scope>BIOPHYSICOCHEMICAL PROPERTIES</scope>
    <scope>ACTIVITY REGULATION</scope>
    <scope>SUBCELLULAR LOCATION</scope>
    <scope>INDUCTION</scope>
</reference>
<reference key="10">
    <citation type="journal article" date="2020" name="Melatonin Res.">
        <title>Rice N-acetylserotonin deacetylase regulates melatonin levels in transgenic rice.</title>
        <authorList>
            <person name="Lee K."/>
            <person name="Hwang O.J."/>
            <person name="Back K."/>
        </authorList>
    </citation>
    <scope>FUNCTION</scope>
    <scope>CATALYTIC ACTIVITY</scope>
</reference>
<feature type="transit peptide" description="Chloroplast" evidence="2">
    <location>
        <begin position="1"/>
        <end position="65"/>
    </location>
</feature>
<feature type="chain" id="PRO_0000453207" description="Histone deacetylase 10, chloroplastic">
    <location>
        <begin position="66"/>
        <end position="443"/>
    </location>
</feature>
<feature type="region of interest" description="Histone deacetylase">
    <location>
        <begin position="82"/>
        <end position="412"/>
    </location>
</feature>
<feature type="active site" description="Proton donor/acceptor" evidence="1">
    <location>
        <position position="222"/>
    </location>
</feature>
<feature type="binding site" evidence="1">
    <location>
        <position position="259"/>
    </location>
    <ligand>
        <name>Zn(2+)</name>
        <dbReference type="ChEBI" id="CHEBI:29105"/>
    </ligand>
</feature>
<feature type="binding site" evidence="1">
    <location>
        <position position="261"/>
    </location>
    <ligand>
        <name>Zn(2+)</name>
        <dbReference type="ChEBI" id="CHEBI:29105"/>
    </ligand>
</feature>
<feature type="binding site" evidence="1">
    <location>
        <position position="346"/>
    </location>
    <ligand>
        <name>Zn(2+)</name>
        <dbReference type="ChEBI" id="CHEBI:29105"/>
    </ligand>
</feature>
<feature type="site" description="Polarizes the scissile carbonyl of the substrate" evidence="1">
    <location>
        <position position="390"/>
    </location>
</feature>
<accession>Q2QWU2</accession>
<accession>Q0IPM4</accession>
<keyword id="KW-0150">Chloroplast</keyword>
<keyword id="KW-0378">Hydrolase</keyword>
<keyword id="KW-0479">Metal-binding</keyword>
<keyword id="KW-0496">Mitochondrion</keyword>
<keyword id="KW-0934">Plastid</keyword>
<keyword id="KW-1185">Reference proteome</keyword>
<keyword id="KW-0809">Transit peptide</keyword>
<keyword id="KW-0862">Zinc</keyword>
<protein>
    <recommendedName>
        <fullName evidence="8">Histone deacetylase 10, chloroplastic</fullName>
        <shortName evidence="8">OsHDAC10</shortName>
        <ecNumber evidence="5 6">3.5.1.-</ecNumber>
    </recommendedName>
    <alternativeName>
        <fullName evidence="9">N-acetylserotonin deacetylase</fullName>
    </alternativeName>
</protein>
<evidence type="ECO:0000250" key="1">
    <source>
        <dbReference type="UniProtKB" id="Q8GXJ1"/>
    </source>
</evidence>
<evidence type="ECO:0000255" key="2"/>
<evidence type="ECO:0000269" key="3">
    <source>
    </source>
</evidence>
<evidence type="ECO:0000269" key="4">
    <source>
    </source>
</evidence>
<evidence type="ECO:0000269" key="5">
    <source>
    </source>
</evidence>
<evidence type="ECO:0000269" key="6">
    <source ref="10"/>
</evidence>
<evidence type="ECO:0000303" key="7">
    <source>
    </source>
</evidence>
<evidence type="ECO:0000303" key="8">
    <source>
    </source>
</evidence>
<evidence type="ECO:0000303" key="9">
    <source>
    </source>
</evidence>
<evidence type="ECO:0000305" key="10"/>
<evidence type="ECO:0000305" key="11">
    <source>
    </source>
</evidence>
<evidence type="ECO:0000305" key="12">
    <source ref="10"/>
</evidence>
<evidence type="ECO:0000312" key="13">
    <source>
        <dbReference type="EMBL" id="ABA95964.1"/>
    </source>
</evidence>
<evidence type="ECO:0000312" key="14">
    <source>
        <dbReference type="EMBL" id="BAT16163.1"/>
    </source>
</evidence>
<gene>
    <name evidence="8" type="primary">HDAC10</name>
    <name evidence="9" type="synonym">ASDAC</name>
    <name evidence="7" type="synonym">HDA714</name>
    <name evidence="14" type="ordered locus">Os12g0182700</name>
    <name evidence="13" type="ordered locus">LOC_Os12g08220</name>
</gene>
<name>HDA10_ORYSJ</name>
<dbReference type="EC" id="3.5.1.-" evidence="5 6"/>
<dbReference type="EMBL" id="DP000011">
    <property type="protein sequence ID" value="ABA95964.1"/>
    <property type="molecule type" value="Genomic_DNA"/>
</dbReference>
<dbReference type="EMBL" id="AP008218">
    <property type="protein sequence ID" value="BAF29341.1"/>
    <property type="molecule type" value="Genomic_DNA"/>
</dbReference>
<dbReference type="EMBL" id="AP014968">
    <property type="protein sequence ID" value="BAT16163.1"/>
    <property type="molecule type" value="Genomic_DNA"/>
</dbReference>
<dbReference type="EMBL" id="CM000149">
    <property type="protein sequence ID" value="EEE52876.1"/>
    <property type="molecule type" value="Genomic_DNA"/>
</dbReference>
<dbReference type="EMBL" id="AK072557">
    <property type="protein sequence ID" value="BAG93031.1"/>
    <property type="molecule type" value="mRNA"/>
</dbReference>
<dbReference type="SMR" id="Q2QWU2"/>
<dbReference type="FunCoup" id="Q2QWU2">
    <property type="interactions" value="339"/>
</dbReference>
<dbReference type="STRING" id="39947.Q2QWU2"/>
<dbReference type="PaxDb" id="39947-Q2QWU2"/>
<dbReference type="EnsemblPlants" id="Os12t0182700-01">
    <property type="protein sequence ID" value="Os12t0182700-01"/>
    <property type="gene ID" value="Os12g0182700"/>
</dbReference>
<dbReference type="Gramene" id="Os12t0182700-01">
    <property type="protein sequence ID" value="Os12t0182700-01"/>
    <property type="gene ID" value="Os12g0182700"/>
</dbReference>
<dbReference type="KEGG" id="dosa:Os12g0182700"/>
<dbReference type="KEGG" id="osa:4351682"/>
<dbReference type="eggNOG" id="KOG1343">
    <property type="taxonomic scope" value="Eukaryota"/>
</dbReference>
<dbReference type="HOGENOM" id="CLU_007727_8_2_1"/>
<dbReference type="InParanoid" id="Q2QWU2"/>
<dbReference type="OMA" id="CTSPAMG"/>
<dbReference type="OrthoDB" id="424012at2759"/>
<dbReference type="BRENDA" id="3.5.1.98">
    <property type="organism ID" value="8948"/>
</dbReference>
<dbReference type="Proteomes" id="UP000000763">
    <property type="component" value="Chromosome 12"/>
</dbReference>
<dbReference type="Proteomes" id="UP000007752">
    <property type="component" value="Chromosome 12"/>
</dbReference>
<dbReference type="Proteomes" id="UP000059680">
    <property type="component" value="Chromosome 12"/>
</dbReference>
<dbReference type="GO" id="GO:0009507">
    <property type="term" value="C:chloroplast"/>
    <property type="evidence" value="ECO:0000314"/>
    <property type="project" value="UniProtKB"/>
</dbReference>
<dbReference type="GO" id="GO:0005737">
    <property type="term" value="C:cytoplasm"/>
    <property type="evidence" value="ECO:0000318"/>
    <property type="project" value="GO_Central"/>
</dbReference>
<dbReference type="GO" id="GO:0000118">
    <property type="term" value="C:histone deacetylase complex"/>
    <property type="evidence" value="ECO:0000318"/>
    <property type="project" value="GO_Central"/>
</dbReference>
<dbReference type="GO" id="GO:0005739">
    <property type="term" value="C:mitochondrion"/>
    <property type="evidence" value="ECO:0000314"/>
    <property type="project" value="UniProtKB"/>
</dbReference>
<dbReference type="GO" id="GO:0019213">
    <property type="term" value="F:deacetylase activity"/>
    <property type="evidence" value="ECO:0000314"/>
    <property type="project" value="UniProtKB"/>
</dbReference>
<dbReference type="GO" id="GO:0004407">
    <property type="term" value="F:histone deacetylase activity"/>
    <property type="evidence" value="ECO:0000318"/>
    <property type="project" value="GO_Central"/>
</dbReference>
<dbReference type="GO" id="GO:0141221">
    <property type="term" value="F:histone deacetylase activity, hydrolytic mechanism"/>
    <property type="evidence" value="ECO:0007669"/>
    <property type="project" value="UniProtKB-EC"/>
</dbReference>
<dbReference type="GO" id="GO:0008270">
    <property type="term" value="F:zinc ion binding"/>
    <property type="evidence" value="ECO:0000250"/>
    <property type="project" value="UniProtKB"/>
</dbReference>
<dbReference type="GO" id="GO:0040029">
    <property type="term" value="P:epigenetic regulation of gene expression"/>
    <property type="evidence" value="ECO:0000318"/>
    <property type="project" value="GO_Central"/>
</dbReference>
<dbReference type="GO" id="GO:0030186">
    <property type="term" value="P:melatonin metabolic process"/>
    <property type="evidence" value="ECO:0000314"/>
    <property type="project" value="UniProtKB"/>
</dbReference>
<dbReference type="CDD" id="cd09992">
    <property type="entry name" value="HDAC_classII"/>
    <property type="match status" value="1"/>
</dbReference>
<dbReference type="Gene3D" id="3.40.800.20">
    <property type="entry name" value="Histone deacetylase domain"/>
    <property type="match status" value="1"/>
</dbReference>
<dbReference type="InterPro" id="IPR050284">
    <property type="entry name" value="HDAC_PDAC"/>
</dbReference>
<dbReference type="InterPro" id="IPR000286">
    <property type="entry name" value="His_deacetylse"/>
</dbReference>
<dbReference type="InterPro" id="IPR023801">
    <property type="entry name" value="His_deacetylse_dom"/>
</dbReference>
<dbReference type="InterPro" id="IPR037138">
    <property type="entry name" value="His_deacetylse_dom_sf"/>
</dbReference>
<dbReference type="InterPro" id="IPR023696">
    <property type="entry name" value="Ureohydrolase_dom_sf"/>
</dbReference>
<dbReference type="PANTHER" id="PTHR10625:SF11">
    <property type="entry name" value="HISTONE DEACETYLASE 14, CHLOROPLASTIC"/>
    <property type="match status" value="1"/>
</dbReference>
<dbReference type="PANTHER" id="PTHR10625">
    <property type="entry name" value="HISTONE DEACETYLASE HDAC1-RELATED"/>
    <property type="match status" value="1"/>
</dbReference>
<dbReference type="Pfam" id="PF00850">
    <property type="entry name" value="Hist_deacetyl"/>
    <property type="match status" value="1"/>
</dbReference>
<dbReference type="PRINTS" id="PR01270">
    <property type="entry name" value="HDASUPER"/>
</dbReference>
<dbReference type="SUPFAM" id="SSF52768">
    <property type="entry name" value="Arginase/deacetylase"/>
    <property type="match status" value="1"/>
</dbReference>
<sequence length="443" mass="48100">MEQLWVPSLPILGGRILPMLRHYCGFGSHHPLTWRSLQITGRKQKHNGCWIAYCLPSHNGTSISDTNGVRKDLALPDNLLRDAHILYCTSPAMGHNKEAHPETNKRVPAIVDALEKLELTSKHRGSQVLEIQDFQPASLDDIALVHSRSYITGLEKAMSRASDEGLIFIEGTGPTYATQTTFQECLLSAGAGITLVDSVVAASKLGPKPPLGFALVRPPGHHAVPEGPMGFCVFGNIAVAARYAQNQHGLKRVMIIDFDVHHGNGTCDAFYEDPDIFFLSTHQLGSYPGTGKIHQVGQGNGEGTTLNLPLPGGSGDYAMRCAFDEVIAPAAQRFKPDIILVSAGYDAHALDPLAGLQFTTGTFYMLAARIREVAAELCGGRCVFFLEGGYNLESLSSSVADTFRAFLGEPSLAARFDDPAMLYEEPTRKIREAIDKAKHLHSL</sequence>
<organism>
    <name type="scientific">Oryza sativa subsp. japonica</name>
    <name type="common">Rice</name>
    <dbReference type="NCBI Taxonomy" id="39947"/>
    <lineage>
        <taxon>Eukaryota</taxon>
        <taxon>Viridiplantae</taxon>
        <taxon>Streptophyta</taxon>
        <taxon>Embryophyta</taxon>
        <taxon>Tracheophyta</taxon>
        <taxon>Spermatophyta</taxon>
        <taxon>Magnoliopsida</taxon>
        <taxon>Liliopsida</taxon>
        <taxon>Poales</taxon>
        <taxon>Poaceae</taxon>
        <taxon>BOP clade</taxon>
        <taxon>Oryzoideae</taxon>
        <taxon>Oryzeae</taxon>
        <taxon>Oryzinae</taxon>
        <taxon>Oryza</taxon>
        <taxon>Oryza sativa</taxon>
    </lineage>
</organism>
<proteinExistence type="evidence at protein level"/>
<comment type="function">
    <text evidence="5 6 11 12">Involved in the regulation of melatonin biosynthesis by catalyzing the deacetylation of N-acetylserotonin to produce serotonin (PubMed:29247559, Ref.10). N-acetylserotonin is methylated by acetylserotonin O-methyltransferase (ASMT) to produce melatonin (N-acetyl-5-methoxytryptamine) (Probable). Deacetylates melatonin to produce 5-methoxytryptamine (PubMed:29247559, Ref.10). In vitro, deacetylates N-acetyltyramine and N-acetyltryptamine to produce tyramine and tryptamine, respectively (PubMed:29247559).</text>
</comment>
<comment type="catalytic activity">
    <reaction evidence="5 6">
        <text>N-acetylserotonin + H2O = serotonin + acetate</text>
        <dbReference type="Rhea" id="RHEA:67196"/>
        <dbReference type="ChEBI" id="CHEBI:15377"/>
        <dbReference type="ChEBI" id="CHEBI:17697"/>
        <dbReference type="ChEBI" id="CHEBI:30089"/>
        <dbReference type="ChEBI" id="CHEBI:350546"/>
    </reaction>
    <physiologicalReaction direction="left-to-right" evidence="5 6">
        <dbReference type="Rhea" id="RHEA:67197"/>
    </physiologicalReaction>
</comment>
<comment type="catalytic activity">
    <reaction evidence="5">
        <text>N-acetyltyramine + H2O = tyramine + acetate</text>
        <dbReference type="Rhea" id="RHEA:67200"/>
        <dbReference type="ChEBI" id="CHEBI:15377"/>
        <dbReference type="ChEBI" id="CHEBI:30089"/>
        <dbReference type="ChEBI" id="CHEBI:125610"/>
        <dbReference type="ChEBI" id="CHEBI:327995"/>
    </reaction>
    <physiologicalReaction direction="left-to-right" evidence="5">
        <dbReference type="Rhea" id="RHEA:67201"/>
    </physiologicalReaction>
</comment>
<comment type="catalytic activity">
    <reaction evidence="5">
        <text>N-acetyltryptamine + H2O = tryptamine + acetate</text>
        <dbReference type="Rhea" id="RHEA:67204"/>
        <dbReference type="ChEBI" id="CHEBI:15377"/>
        <dbReference type="ChEBI" id="CHEBI:30089"/>
        <dbReference type="ChEBI" id="CHEBI:55515"/>
        <dbReference type="ChEBI" id="CHEBI:57887"/>
    </reaction>
    <physiologicalReaction direction="left-to-right" evidence="5">
        <dbReference type="Rhea" id="RHEA:67205"/>
    </physiologicalReaction>
</comment>
<comment type="catalytic activity">
    <reaction evidence="5 6">
        <text>melatonin + H2O = 5-methoxytryptamine + acetate</text>
        <dbReference type="Rhea" id="RHEA:67208"/>
        <dbReference type="ChEBI" id="CHEBI:15377"/>
        <dbReference type="ChEBI" id="CHEBI:16796"/>
        <dbReference type="ChEBI" id="CHEBI:30089"/>
        <dbReference type="ChEBI" id="CHEBI:166874"/>
    </reaction>
    <physiologicalReaction direction="left-to-right" evidence="5 6">
        <dbReference type="Rhea" id="RHEA:67209"/>
    </physiologicalReaction>
</comment>
<comment type="cofactor">
    <cofactor evidence="1">
        <name>Zn(2+)</name>
        <dbReference type="ChEBI" id="CHEBI:29105"/>
    </cofactor>
    <text evidence="1">Binds 1 zinc ion per subunit.</text>
</comment>
<comment type="activity regulation">
    <text evidence="5">The activity of this enzyme is not inhibited by butyrate, a well-known histone deacetylase inhibitor.</text>
</comment>
<comment type="biophysicochemical properties">
    <kinetics>
        <KM evidence="5">409 uM for N-acetylserotonin</KM>
        <Vmax evidence="5">1.0 pmol/sec/mg enzyme with N-acetylserotonin as substrate</Vmax>
    </kinetics>
    <phDependence>
        <text evidence="5">Optimum pH is 6.8-8.8.</text>
    </phDependence>
    <temperatureDependence>
        <text evidence="5">Optimum temperature is 30 degrees Celsius.</text>
    </temperatureDependence>
</comment>
<comment type="subcellular location">
    <subcellularLocation>
        <location evidence="4 5">Plastid</location>
        <location evidence="4 5">Chloroplast</location>
    </subcellularLocation>
    <subcellularLocation>
        <location evidence="4">Mitochondrion</location>
    </subcellularLocation>
</comment>
<comment type="tissue specificity">
    <text evidence="3 4">Expressed in leaves (PubMed:17399684). Expressed in coleoptiles, leaves, flag leaves and flowers (PubMed:19505461). Expressed at low levels in roots (PubMed:19505461).</text>
</comment>
<comment type="induction">
    <text evidence="5">Down-regulated by treatment with cadmium.</text>
</comment>
<comment type="similarity">
    <text evidence="10">Belongs to the histone deacetylase family.</text>
</comment>